<feature type="transit peptide" description="Mitochondrion" evidence="2">
    <location>
        <begin position="1"/>
        <end position="28"/>
    </location>
</feature>
<feature type="chain" id="PRO_0000432581" description="Bifunctional TH2 protein, mitochondrial" evidence="2">
    <location>
        <begin position="29"/>
        <end position="617"/>
    </location>
</feature>
<feature type="active site" description="Nucleophile" evidence="1">
    <location>
        <position position="213"/>
    </location>
</feature>
<feature type="active site" description="Proton donor" evidence="1">
    <location>
        <position position="286"/>
    </location>
</feature>
<feature type="binding site" evidence="1">
    <location>
        <position position="107"/>
    </location>
    <ligand>
        <name>substrate</name>
    </ligand>
</feature>
<feature type="binding site" evidence="1">
    <location>
        <position position="217"/>
    </location>
    <ligand>
        <name>substrate</name>
    </ligand>
</feature>
<feature type="binding site" evidence="1">
    <location>
        <position position="244"/>
    </location>
    <ligand>
        <name>substrate</name>
    </ligand>
</feature>
<feature type="splice variant" id="VSP_058706" description="In isoform 2." evidence="8">
    <location>
        <begin position="1"/>
        <end position="46"/>
    </location>
</feature>
<feature type="mutagenesis site" description="No effect on the mitochondrial localization." evidence="3">
    <original>M</original>
    <variation>L</variation>
    <location>
        <position position="47"/>
    </location>
</feature>
<feature type="mutagenesis site" description="Loss of hydrolase activity." evidence="3">
    <original>C</original>
    <variation>A</variation>
    <location>
        <position position="213"/>
    </location>
</feature>
<feature type="mutagenesis site" description="Loss of phosphatase activity." evidence="3">
    <original>D</original>
    <variation>A</variation>
    <location>
        <position position="317"/>
    </location>
</feature>
<feature type="sequence conflict" description="In Ref. 3; BAF02003." evidence="6" ref="3">
    <original>E</original>
    <variation>G</variation>
    <location>
        <position position="504"/>
    </location>
</feature>
<reference key="1">
    <citation type="journal article" date="2000" name="Nature">
        <title>Sequence and analysis of chromosome 5 of the plant Arabidopsis thaliana.</title>
        <authorList>
            <person name="Tabata S."/>
            <person name="Kaneko T."/>
            <person name="Nakamura Y."/>
            <person name="Kotani H."/>
            <person name="Kato T."/>
            <person name="Asamizu E."/>
            <person name="Miyajima N."/>
            <person name="Sasamoto S."/>
            <person name="Kimura T."/>
            <person name="Hosouchi T."/>
            <person name="Kawashima K."/>
            <person name="Kohara M."/>
            <person name="Matsumoto M."/>
            <person name="Matsuno A."/>
            <person name="Muraki A."/>
            <person name="Nakayama S."/>
            <person name="Nakazaki N."/>
            <person name="Naruo K."/>
            <person name="Okumura S."/>
            <person name="Shinpo S."/>
            <person name="Takeuchi C."/>
            <person name="Wada T."/>
            <person name="Watanabe A."/>
            <person name="Yamada M."/>
            <person name="Yasuda M."/>
            <person name="Sato S."/>
            <person name="de la Bastide M."/>
            <person name="Huang E."/>
            <person name="Spiegel L."/>
            <person name="Gnoj L."/>
            <person name="O'Shaughnessy A."/>
            <person name="Preston R."/>
            <person name="Habermann K."/>
            <person name="Murray J."/>
            <person name="Johnson D."/>
            <person name="Rohlfing T."/>
            <person name="Nelson J."/>
            <person name="Stoneking T."/>
            <person name="Pepin K."/>
            <person name="Spieth J."/>
            <person name="Sekhon M."/>
            <person name="Armstrong J."/>
            <person name="Becker M."/>
            <person name="Belter E."/>
            <person name="Cordum H."/>
            <person name="Cordes M."/>
            <person name="Courtney L."/>
            <person name="Courtney W."/>
            <person name="Dante M."/>
            <person name="Du H."/>
            <person name="Edwards J."/>
            <person name="Fryman J."/>
            <person name="Haakensen B."/>
            <person name="Lamar E."/>
            <person name="Latreille P."/>
            <person name="Leonard S."/>
            <person name="Meyer R."/>
            <person name="Mulvaney E."/>
            <person name="Ozersky P."/>
            <person name="Riley A."/>
            <person name="Strowmatt C."/>
            <person name="Wagner-McPherson C."/>
            <person name="Wollam A."/>
            <person name="Yoakum M."/>
            <person name="Bell M."/>
            <person name="Dedhia N."/>
            <person name="Parnell L."/>
            <person name="Shah R."/>
            <person name="Rodriguez M."/>
            <person name="Hoon See L."/>
            <person name="Vil D."/>
            <person name="Baker J."/>
            <person name="Kirchoff K."/>
            <person name="Toth K."/>
            <person name="King L."/>
            <person name="Bahret A."/>
            <person name="Miller B."/>
            <person name="Marra M.A."/>
            <person name="Martienssen R."/>
            <person name="McCombie W.R."/>
            <person name="Wilson R.K."/>
            <person name="Murphy G."/>
            <person name="Bancroft I."/>
            <person name="Volckaert G."/>
            <person name="Wambutt R."/>
            <person name="Duesterhoeft A."/>
            <person name="Stiekema W."/>
            <person name="Pohl T."/>
            <person name="Entian K.-D."/>
            <person name="Terryn N."/>
            <person name="Hartley N."/>
            <person name="Bent E."/>
            <person name="Johnson S."/>
            <person name="Langham S.-A."/>
            <person name="McCullagh B."/>
            <person name="Robben J."/>
            <person name="Grymonprez B."/>
            <person name="Zimmermann W."/>
            <person name="Ramsperger U."/>
            <person name="Wedler H."/>
            <person name="Balke K."/>
            <person name="Wedler E."/>
            <person name="Peters S."/>
            <person name="van Staveren M."/>
            <person name="Dirkse W."/>
            <person name="Mooijman P."/>
            <person name="Klein Lankhorst R."/>
            <person name="Weitzenegger T."/>
            <person name="Bothe G."/>
            <person name="Rose M."/>
            <person name="Hauf J."/>
            <person name="Berneiser S."/>
            <person name="Hempel S."/>
            <person name="Feldpausch M."/>
            <person name="Lamberth S."/>
            <person name="Villarroel R."/>
            <person name="Gielen J."/>
            <person name="Ardiles W."/>
            <person name="Bents O."/>
            <person name="Lemcke K."/>
            <person name="Kolesov G."/>
            <person name="Mayer K.F.X."/>
            <person name="Rudd S."/>
            <person name="Schoof H."/>
            <person name="Schueller C."/>
            <person name="Zaccaria P."/>
            <person name="Mewes H.-W."/>
            <person name="Bevan M."/>
            <person name="Fransz P.F."/>
        </authorList>
    </citation>
    <scope>NUCLEOTIDE SEQUENCE [LARGE SCALE GENOMIC DNA]</scope>
    <source>
        <strain>cv. Columbia</strain>
    </source>
</reference>
<reference key="2">
    <citation type="journal article" date="2017" name="Plant J.">
        <title>Araport11: a complete reannotation of the Arabidopsis thaliana reference genome.</title>
        <authorList>
            <person name="Cheng C.Y."/>
            <person name="Krishnakumar V."/>
            <person name="Chan A.P."/>
            <person name="Thibaud-Nissen F."/>
            <person name="Schobel S."/>
            <person name="Town C.D."/>
        </authorList>
    </citation>
    <scope>GENOME REANNOTATION</scope>
    <source>
        <strain>cv. Columbia</strain>
    </source>
</reference>
<reference key="3">
    <citation type="submission" date="2006-07" db="EMBL/GenBank/DDBJ databases">
        <title>Large-scale analysis of RIKEN Arabidopsis full-length (RAFL) cDNAs.</title>
        <authorList>
            <person name="Totoki Y."/>
            <person name="Seki M."/>
            <person name="Ishida J."/>
            <person name="Nakajima M."/>
            <person name="Enju A."/>
            <person name="Kamiya A."/>
            <person name="Narusaka M."/>
            <person name="Shin-i T."/>
            <person name="Nakagawa M."/>
            <person name="Sakamoto N."/>
            <person name="Oishi K."/>
            <person name="Kohara Y."/>
            <person name="Kobayashi M."/>
            <person name="Toyoda A."/>
            <person name="Sakaki Y."/>
            <person name="Sakurai T."/>
            <person name="Iida K."/>
            <person name="Akiyama K."/>
            <person name="Satou M."/>
            <person name="Toyoda T."/>
            <person name="Konagaya A."/>
            <person name="Carninci P."/>
            <person name="Kawai J."/>
            <person name="Hayashizaki Y."/>
            <person name="Shinozaki K."/>
        </authorList>
    </citation>
    <scope>NUCLEOTIDE SEQUENCE [LARGE SCALE MRNA]</scope>
    <source>
        <strain>cv. Columbia</strain>
    </source>
</reference>
<reference key="4">
    <citation type="journal article" date="2014" name="Biochem. J.">
        <title>Salvage of the thiamin pyrimidine moiety by plant TenA proteins lacking an active-site cysteine.</title>
        <authorList>
            <person name="Zallot R."/>
            <person name="Yazdani M."/>
            <person name="Goyer A."/>
            <person name="Ziemak M.J."/>
            <person name="Guan J.C."/>
            <person name="McCarty D.R."/>
            <person name="de Crecy-Lagard V."/>
            <person name="Gerdes S."/>
            <person name="Garrett T.J."/>
            <person name="Benach J."/>
            <person name="Hunt J.F."/>
            <person name="Shintani D.K."/>
            <person name="Hanson A.D."/>
        </authorList>
    </citation>
    <scope>FUNCTION</scope>
</reference>
<reference key="5">
    <citation type="journal article" date="2016" name="Plant Cell">
        <title>Arabidopsis TH2 encodes the orphan enzyme thiamin monophosphate phosphatase.</title>
        <authorList>
            <person name="Mimura M."/>
            <person name="Zallot R."/>
            <person name="Niehaus T.D."/>
            <person name="Hasnain G."/>
            <person name="Gidda S.K."/>
            <person name="Nguyen T.N."/>
            <person name="Anderson E.M."/>
            <person name="Mullen R.T."/>
            <person name="Brown G."/>
            <person name="Yakunin A.F."/>
            <person name="de Crecy-Lagard V."/>
            <person name="Gregory J.F."/>
            <person name="McCarty D.R."/>
            <person name="Hanson A.D."/>
        </authorList>
    </citation>
    <scope>FUNCTION</scope>
    <scope>CATALYTIC ACTIVITY</scope>
    <scope>MUTAGENESIS OF MET-47; CYS-213 AND ASP-317</scope>
    <scope>DOMAIN</scope>
    <scope>BIOPHYSICOCHEMICAL PROPERTIES</scope>
    <scope>ALTERNATIVE SPLICING</scope>
    <scope>SUBCELLULAR LOCATION</scope>
</reference>
<proteinExistence type="evidence at protein level"/>
<gene>
    <name evidence="5" type="primary">TH2</name>
    <name evidence="5" type="synonym">TH-2</name>
    <name evidence="4" type="synonym">TNEA_C</name>
    <name evidence="9" type="ordered locus">At5g32470</name>
    <name evidence="10" type="ORF">F18O9.80</name>
</gene>
<name>TENAC_ARATH</name>
<comment type="function">
    <text evidence="3 7">May be involved in the salvage of thiamine breakdown products (PubMed:25014715). This protein has a haloacid dehalogenase family domain fused to its TenA domain (PubMed:25014715). Phosphatase with the highest activity against thiamine monophosphate (ThMP) and, with a lower activity, against thiamine diphosphate (ThDP), flavin mononucleotide, inorganic pyrophosphate, CTP and dATP (PubMed:27677881). Has a thiamine salvage hydrolase activity, but only against 4-amino-5-aminomethyl-2-methylpyrimidine (amino-HMP) and not against N-formylamino-HMP, desthiothiamine, thiamine, ThMP, and ThDP (PubMed:27677881).</text>
</comment>
<comment type="catalytic activity">
    <reaction evidence="3">
        <text>thiamine phosphate + H2O = thiamine + phosphate</text>
        <dbReference type="Rhea" id="RHEA:47948"/>
        <dbReference type="ChEBI" id="CHEBI:15377"/>
        <dbReference type="ChEBI" id="CHEBI:18385"/>
        <dbReference type="ChEBI" id="CHEBI:37575"/>
        <dbReference type="ChEBI" id="CHEBI:43474"/>
        <dbReference type="EC" id="3.1.3.100"/>
    </reaction>
</comment>
<comment type="catalytic activity">
    <reaction evidence="3">
        <text>4-amino-5-aminomethyl-2-methylpyrimidine + H2O = 4-amino-5-hydroxymethyl-2-methylpyrimidine + NH4(+)</text>
        <dbReference type="Rhea" id="RHEA:31799"/>
        <dbReference type="ChEBI" id="CHEBI:15377"/>
        <dbReference type="ChEBI" id="CHEBI:16892"/>
        <dbReference type="ChEBI" id="CHEBI:28938"/>
        <dbReference type="ChEBI" id="CHEBI:63416"/>
        <dbReference type="EC" id="3.5.99.2"/>
    </reaction>
</comment>
<comment type="biophysicochemical properties">
    <kinetics>
        <KM evidence="3">1.86 uM for thiamine monophosphate</KM>
        <text evidence="3">kcat is 13.5 sec(-1) for thiamine monophosphate.</text>
    </kinetics>
</comment>
<comment type="subcellular location">
    <molecule>Isoform 1</molecule>
    <subcellularLocation>
        <location evidence="3">Mitochondrion</location>
    </subcellularLocation>
    <subcellularLocation>
        <location evidence="3">Cytoplasm</location>
    </subcellularLocation>
    <text evidence="3">Localized to the mitochondrion when the first start codon is preceded by a strong Kozak sequence.</text>
</comment>
<comment type="subcellular location">
    <molecule>Isoform 2</molecule>
    <subcellularLocation>
        <location evidence="3">Cytoplasm</location>
    </subcellularLocation>
</comment>
<comment type="alternative products">
    <event type="alternative splicing"/>
    <isoform>
        <id>F4KFT7-1</id>
        <name>1</name>
        <sequence type="displayed"/>
    </isoform>
    <isoform>
        <id>F4KFT7-2</id>
        <name>2</name>
        <sequence type="described" ref="VSP_058706"/>
    </isoform>
</comment>
<comment type="domain">
    <text evidence="3">The thiamine monophosphate phosphatase activity resides in the HAD domain (297-571), while the TenA domain (85-292) has thiamine salvage hydrolase activity (PubMed:27677881).</text>
</comment>
<comment type="miscellaneous">
    <text evidence="3">Knockdown mutants show reductions in root length and shoot growth.</text>
</comment>
<comment type="similarity">
    <text evidence="6">In the N-terminal section; belongs to the TenA family.</text>
</comment>
<comment type="similarity">
    <text evidence="6">In the C-terminal section; belongs to the HAD-like hydrolase superfamily.</text>
</comment>
<comment type="sequence caution" evidence="6">
    <conflict type="erroneous initiation">
        <sequence resource="EMBL-CDS" id="BAF00660"/>
    </conflict>
    <text>Extended N-terminus.</text>
</comment>
<comment type="sequence caution" evidence="6">
    <conflict type="erroneous initiation">
        <sequence resource="EMBL-CDS" id="BAF02003"/>
    </conflict>
    <text>Truncated N-terminus.</text>
</comment>
<keyword id="KW-0025">Alternative splicing</keyword>
<keyword id="KW-0963">Cytoplasm</keyword>
<keyword id="KW-0378">Hydrolase</keyword>
<keyword id="KW-0496">Mitochondrion</keyword>
<keyword id="KW-0511">Multifunctional enzyme</keyword>
<keyword id="KW-1185">Reference proteome</keyword>
<keyword id="KW-0809">Transit peptide</keyword>
<organism evidence="11">
    <name type="scientific">Arabidopsis thaliana</name>
    <name type="common">Mouse-ear cress</name>
    <dbReference type="NCBI Taxonomy" id="3702"/>
    <lineage>
        <taxon>Eukaryota</taxon>
        <taxon>Viridiplantae</taxon>
        <taxon>Streptophyta</taxon>
        <taxon>Embryophyta</taxon>
        <taxon>Tracheophyta</taxon>
        <taxon>Spermatophyta</taxon>
        <taxon>Magnoliopsida</taxon>
        <taxon>eudicotyledons</taxon>
        <taxon>Gunneridae</taxon>
        <taxon>Pentapetalae</taxon>
        <taxon>rosids</taxon>
        <taxon>malvids</taxon>
        <taxon>Brassicales</taxon>
        <taxon>Brassicaceae</taxon>
        <taxon>Camelineae</taxon>
        <taxon>Arabidopsis</taxon>
    </lineage>
</organism>
<evidence type="ECO:0000250" key="1">
    <source>
        <dbReference type="UniProtKB" id="P25052"/>
    </source>
</evidence>
<evidence type="ECO:0000255" key="2"/>
<evidence type="ECO:0000269" key="3">
    <source>
    </source>
</evidence>
<evidence type="ECO:0000303" key="4">
    <source>
    </source>
</evidence>
<evidence type="ECO:0000303" key="5">
    <source>
    </source>
</evidence>
<evidence type="ECO:0000305" key="6"/>
<evidence type="ECO:0000305" key="7">
    <source>
    </source>
</evidence>
<evidence type="ECO:0000305" key="8">
    <source>
    </source>
</evidence>
<evidence type="ECO:0000312" key="9">
    <source>
        <dbReference type="Araport" id="AT5G32470"/>
    </source>
</evidence>
<evidence type="ECO:0000312" key="10">
    <source>
        <dbReference type="EMBL" id="AF296831"/>
    </source>
</evidence>
<evidence type="ECO:0000312" key="11">
    <source>
        <dbReference type="Proteomes" id="UP000006548"/>
    </source>
</evidence>
<accession>F4KFT7</accession>
<accession>Q0WLK4</accession>
<accession>Q0WQD9</accession>
<sequence length="617" mass="68964">MRFLFPTRLINNSSLGLLRSPHTTAPIRSLWFRTKSPVFRSATTPIMTAVAFSSSLSIPPTSEEALPGKLWIKFNRECLFSIYSPFAVCLAAGNLKIDTFRQYIAQDVHFLKAFAHAYELAADCADDDDDKLAISDLRKSVMEELKMHDSFVQDWDLDINKEVSVNSATLRYTEFLLATASGKVEGCKAPGMLDTPFEKTKVAAYTLGAVTPCMRLYAFLGKEFGSLLDLSDVNHPYKKWIDNYSSDAFQASAKQTEDLLEKLSVSMTGEELDIIEKLYQQAMKLEVEFFHAQPLAQPTIVPLLKNHSKDDLVIFSDFDLTCTVVDSSAILAEIAIVTAPKDEQSRSGQQIHRMLSSDLKNTWNLLSKQYTEHYEECIESILNKKKADKFDYEGLCKALEQLSDFEKEANNRVIESGVLKGLNLEDIKRAGERLILQDGCINVFQKILKTENLNAELHVLSYCWCGDLIRAAFSAGGVDAVEVHANEFTFEESISTGEIERKVESPINKAQQFKSILQNRKNENNKKSFLSVYIGDSVGDLLCLLEADIGIVVSSSSSLRRVGSHFGVSFVPLFSGIVQKQKQHTEESSSSAWKGLSGTLYTVSSWAEIHSFALGWE</sequence>
<protein>
    <recommendedName>
        <fullName evidence="5">Bifunctional TH2 protein, mitochondrial</fullName>
    </recommendedName>
    <alternativeName>
        <fullName evidence="5">THIAMINE REQUIRING 2</fullName>
    </alternativeName>
    <domain>
        <recommendedName>
            <fullName evidence="5">Thiamine phosphate phosphatase</fullName>
            <ecNumber evidence="3">3.1.3.100</ecNumber>
        </recommendedName>
    </domain>
    <domain>
        <recommendedName>
            <fullName evidence="4">Aminopyrimidine aminohydrolase</fullName>
            <ecNumber evidence="3">3.5.99.2</ecNumber>
        </recommendedName>
    </domain>
</protein>
<dbReference type="EC" id="3.1.3.100" evidence="3"/>
<dbReference type="EC" id="3.5.99.2" evidence="3"/>
<dbReference type="EMBL" id="AF296831">
    <property type="status" value="NOT_ANNOTATED_CDS"/>
    <property type="molecule type" value="Genomic_DNA"/>
</dbReference>
<dbReference type="EMBL" id="CP002688">
    <property type="protein sequence ID" value="AED93884.1"/>
    <property type="molecule type" value="Genomic_DNA"/>
</dbReference>
<dbReference type="EMBL" id="AK228760">
    <property type="protein sequence ID" value="BAF00660.1"/>
    <property type="status" value="ALT_INIT"/>
    <property type="molecule type" value="mRNA"/>
</dbReference>
<dbReference type="EMBL" id="AK230194">
    <property type="protein sequence ID" value="BAF02003.1"/>
    <property type="status" value="ALT_INIT"/>
    <property type="molecule type" value="mRNA"/>
</dbReference>
<dbReference type="RefSeq" id="NP_198287.3">
    <molecule id="F4KFT7-1"/>
    <property type="nucleotide sequence ID" value="NM_122826.5"/>
</dbReference>
<dbReference type="SMR" id="F4KFT7"/>
<dbReference type="FunCoup" id="F4KFT7">
    <property type="interactions" value="2299"/>
</dbReference>
<dbReference type="STRING" id="3702.F4KFT7"/>
<dbReference type="PaxDb" id="3702-AT5G32470.1"/>
<dbReference type="ProteomicsDB" id="234255">
    <molecule id="F4KFT7-1"/>
</dbReference>
<dbReference type="EnsemblPlants" id="AT5G32470.1">
    <molecule id="F4KFT7-1"/>
    <property type="protein sequence ID" value="AT5G32470.1"/>
    <property type="gene ID" value="AT5G32470"/>
</dbReference>
<dbReference type="GeneID" id="833206"/>
<dbReference type="Gramene" id="AT5G32470.1">
    <molecule id="F4KFT7-1"/>
    <property type="protein sequence ID" value="AT5G32470.1"/>
    <property type="gene ID" value="AT5G32470"/>
</dbReference>
<dbReference type="KEGG" id="ath:AT5G32470"/>
<dbReference type="Araport" id="AT5G32470"/>
<dbReference type="TAIR" id="AT5G32470">
    <property type="gene designation" value="TH2"/>
</dbReference>
<dbReference type="eggNOG" id="ENOG502QQU0">
    <property type="taxonomic scope" value="Eukaryota"/>
</dbReference>
<dbReference type="HOGENOM" id="CLU_035372_0_0_1"/>
<dbReference type="InParanoid" id="F4KFT7"/>
<dbReference type="OMA" id="GHINRQM"/>
<dbReference type="OrthoDB" id="10028886at2759"/>
<dbReference type="PhylomeDB" id="F4KFT7"/>
<dbReference type="BioCyc" id="ARA:AT5G32470-MONOMER"/>
<dbReference type="BioCyc" id="MetaCyc:GQT-4007-MONOMER"/>
<dbReference type="PRO" id="PR:F4KFT7"/>
<dbReference type="Proteomes" id="UP000006548">
    <property type="component" value="Chromosome 5"/>
</dbReference>
<dbReference type="ExpressionAtlas" id="F4KFT7">
    <property type="expression patterns" value="baseline and differential"/>
</dbReference>
<dbReference type="GO" id="GO:0005829">
    <property type="term" value="C:cytosol"/>
    <property type="evidence" value="ECO:0000314"/>
    <property type="project" value="TAIR"/>
</dbReference>
<dbReference type="GO" id="GO:0005739">
    <property type="term" value="C:mitochondrion"/>
    <property type="evidence" value="ECO:0000314"/>
    <property type="project" value="TAIR"/>
</dbReference>
<dbReference type="GO" id="GO:0050334">
    <property type="term" value="F:thiaminase activity"/>
    <property type="evidence" value="ECO:0007669"/>
    <property type="project" value="UniProtKB-EC"/>
</dbReference>
<dbReference type="GO" id="GO:0042131">
    <property type="term" value="F:thiamine phosphate phosphatase activity"/>
    <property type="evidence" value="ECO:0000314"/>
    <property type="project" value="TAIR"/>
</dbReference>
<dbReference type="GO" id="GO:0009228">
    <property type="term" value="P:thiamine biosynthetic process"/>
    <property type="evidence" value="ECO:0000315"/>
    <property type="project" value="TAIR"/>
</dbReference>
<dbReference type="CDD" id="cd19368">
    <property type="entry name" value="TenA_C_AtTH2-like"/>
    <property type="match status" value="1"/>
</dbReference>
<dbReference type="FunFam" id="1.20.910.10:FF:000006">
    <property type="entry name" value="Bifunctional TH2 protein, mitochondrial"/>
    <property type="match status" value="1"/>
</dbReference>
<dbReference type="Gene3D" id="3.40.50.1000">
    <property type="entry name" value="HAD superfamily/HAD-like"/>
    <property type="match status" value="1"/>
</dbReference>
<dbReference type="Gene3D" id="1.20.910.10">
    <property type="entry name" value="Heme oxygenase-like"/>
    <property type="match status" value="1"/>
</dbReference>
<dbReference type="InterPro" id="IPR036412">
    <property type="entry name" value="HAD-like_sf"/>
</dbReference>
<dbReference type="InterPro" id="IPR023214">
    <property type="entry name" value="HAD_sf"/>
</dbReference>
<dbReference type="InterPro" id="IPR016084">
    <property type="entry name" value="Haem_Oase-like_multi-hlx"/>
</dbReference>
<dbReference type="InterPro" id="IPR004305">
    <property type="entry name" value="Thiaminase-2/PQQC"/>
</dbReference>
<dbReference type="InterPro" id="IPR050967">
    <property type="entry name" value="Thiamine_Salvage_TenA"/>
</dbReference>
<dbReference type="PANTHER" id="PTHR43198">
    <property type="entry name" value="BIFUNCTIONAL TH2 PROTEIN"/>
    <property type="match status" value="1"/>
</dbReference>
<dbReference type="PANTHER" id="PTHR43198:SF2">
    <property type="entry name" value="SI:CH1073-67J19.1-RELATED"/>
    <property type="match status" value="1"/>
</dbReference>
<dbReference type="Pfam" id="PF03070">
    <property type="entry name" value="TENA_THI-4"/>
    <property type="match status" value="2"/>
</dbReference>
<dbReference type="SUPFAM" id="SSF56784">
    <property type="entry name" value="HAD-like"/>
    <property type="match status" value="1"/>
</dbReference>
<dbReference type="SUPFAM" id="SSF48613">
    <property type="entry name" value="Heme oxygenase-like"/>
    <property type="match status" value="1"/>
</dbReference>